<proteinExistence type="inferred from homology"/>
<comment type="catalytic activity">
    <reaction evidence="1">
        <text>1-(5-phospho-beta-D-ribosyl)-5-[(5-phospho-beta-D-ribosylamino)methylideneamino]imidazole-4-carboxamide = 5-[(5-phospho-1-deoxy-D-ribulos-1-ylimino)methylamino]-1-(5-phospho-beta-D-ribosyl)imidazole-4-carboxamide</text>
        <dbReference type="Rhea" id="RHEA:15469"/>
        <dbReference type="ChEBI" id="CHEBI:58435"/>
        <dbReference type="ChEBI" id="CHEBI:58525"/>
        <dbReference type="EC" id="5.3.1.16"/>
    </reaction>
</comment>
<comment type="pathway">
    <text evidence="1">Amino-acid biosynthesis; L-histidine biosynthesis; L-histidine from 5-phospho-alpha-D-ribose 1-diphosphate: step 4/9.</text>
</comment>
<comment type="subcellular location">
    <subcellularLocation>
        <location evidence="1">Cytoplasm</location>
    </subcellularLocation>
</comment>
<comment type="similarity">
    <text evidence="1">Belongs to the HisA/HisF family.</text>
</comment>
<organism>
    <name type="scientific">Prochlorococcus marinus subsp. pastoris (strain CCMP1986 / NIES-2087 / MED4)</name>
    <dbReference type="NCBI Taxonomy" id="59919"/>
    <lineage>
        <taxon>Bacteria</taxon>
        <taxon>Bacillati</taxon>
        <taxon>Cyanobacteriota</taxon>
        <taxon>Cyanophyceae</taxon>
        <taxon>Synechococcales</taxon>
        <taxon>Prochlorococcaceae</taxon>
        <taxon>Prochlorococcus</taxon>
    </lineage>
</organism>
<protein>
    <recommendedName>
        <fullName evidence="1">1-(5-phosphoribosyl)-5-[(5-phosphoribosylamino)methylideneamino] imidazole-4-carboxamide isomerase</fullName>
        <ecNumber evidence="1">5.3.1.16</ecNumber>
    </recommendedName>
    <alternativeName>
        <fullName evidence="1">Phosphoribosylformimino-5-aminoimidazole carboxamide ribotide isomerase</fullName>
    </alternativeName>
</protein>
<name>HIS4_PROMP</name>
<sequence length="255" mass="28163">MKLIPAIDLMNGKCVRLFKGDFNKKKDFSREPYEQAKYWENEGAKCIHIVDLDAAKTGIPTNDQSIQKIVKSVNIPIQIGGGIRSLERIKQLFSYGVDKVIMGTSAIENKELVKSLSTKFPSRIIIGIDAKEGKVSTRGWLKQSDVLATELVQEFSSFKIASFIVTDINTDGTLEGTNEVFIKKILEITDIPVIASGGVGSISDLLSLTKFEDSGLYGVIVGKALYENKFTISEASNILSTERINDIPINKDYYA</sequence>
<reference key="1">
    <citation type="journal article" date="2003" name="Nature">
        <title>Genome divergence in two Prochlorococcus ecotypes reflects oceanic niche differentiation.</title>
        <authorList>
            <person name="Rocap G."/>
            <person name="Larimer F.W."/>
            <person name="Lamerdin J.E."/>
            <person name="Malfatti S."/>
            <person name="Chain P."/>
            <person name="Ahlgren N.A."/>
            <person name="Arellano A."/>
            <person name="Coleman M."/>
            <person name="Hauser L."/>
            <person name="Hess W.R."/>
            <person name="Johnson Z.I."/>
            <person name="Land M.L."/>
            <person name="Lindell D."/>
            <person name="Post A.F."/>
            <person name="Regala W."/>
            <person name="Shah M."/>
            <person name="Shaw S.L."/>
            <person name="Steglich C."/>
            <person name="Sullivan M.B."/>
            <person name="Ting C.S."/>
            <person name="Tolonen A."/>
            <person name="Webb E.A."/>
            <person name="Zinser E.R."/>
            <person name="Chisholm S.W."/>
        </authorList>
    </citation>
    <scope>NUCLEOTIDE SEQUENCE [LARGE SCALE GENOMIC DNA]</scope>
    <source>
        <strain>CCMP1986 / NIES-2087 / MED4</strain>
    </source>
</reference>
<evidence type="ECO:0000255" key="1">
    <source>
        <dbReference type="HAMAP-Rule" id="MF_01014"/>
    </source>
</evidence>
<accession>Q7TUA7</accession>
<gene>
    <name evidence="1" type="primary">hisA</name>
    <name type="ordered locus">PMM0796</name>
</gene>
<keyword id="KW-0028">Amino-acid biosynthesis</keyword>
<keyword id="KW-0963">Cytoplasm</keyword>
<keyword id="KW-0368">Histidine biosynthesis</keyword>
<keyword id="KW-0413">Isomerase</keyword>
<feature type="chain" id="PRO_0000142037" description="1-(5-phosphoribosyl)-5-[(5-phosphoribosylamino)methylideneamino] imidazole-4-carboxamide isomerase">
    <location>
        <begin position="1"/>
        <end position="255"/>
    </location>
</feature>
<feature type="active site" description="Proton acceptor" evidence="1">
    <location>
        <position position="8"/>
    </location>
</feature>
<feature type="active site" description="Proton donor" evidence="1">
    <location>
        <position position="129"/>
    </location>
</feature>
<dbReference type="EC" id="5.3.1.16" evidence="1"/>
<dbReference type="EMBL" id="BX548174">
    <property type="protein sequence ID" value="CAE19255.1"/>
    <property type="molecule type" value="Genomic_DNA"/>
</dbReference>
<dbReference type="RefSeq" id="WP_011132430.1">
    <property type="nucleotide sequence ID" value="NC_005072.1"/>
</dbReference>
<dbReference type="SMR" id="Q7TUA7"/>
<dbReference type="STRING" id="59919.PMM0796"/>
<dbReference type="KEGG" id="pmm:PMM0796"/>
<dbReference type="eggNOG" id="COG0106">
    <property type="taxonomic scope" value="Bacteria"/>
</dbReference>
<dbReference type="HOGENOM" id="CLU_048577_1_1_3"/>
<dbReference type="OrthoDB" id="9807749at2"/>
<dbReference type="UniPathway" id="UPA00031">
    <property type="reaction ID" value="UER00009"/>
</dbReference>
<dbReference type="Proteomes" id="UP000001026">
    <property type="component" value="Chromosome"/>
</dbReference>
<dbReference type="GO" id="GO:0005737">
    <property type="term" value="C:cytoplasm"/>
    <property type="evidence" value="ECO:0007669"/>
    <property type="project" value="UniProtKB-SubCell"/>
</dbReference>
<dbReference type="GO" id="GO:0003949">
    <property type="term" value="F:1-(5-phosphoribosyl)-5-[(5-phosphoribosylamino)methylideneamino]imidazole-4-carboxamide isomerase activity"/>
    <property type="evidence" value="ECO:0007669"/>
    <property type="project" value="UniProtKB-UniRule"/>
</dbReference>
<dbReference type="GO" id="GO:0000105">
    <property type="term" value="P:L-histidine biosynthetic process"/>
    <property type="evidence" value="ECO:0007669"/>
    <property type="project" value="UniProtKB-UniRule"/>
</dbReference>
<dbReference type="GO" id="GO:0000162">
    <property type="term" value="P:L-tryptophan biosynthetic process"/>
    <property type="evidence" value="ECO:0007669"/>
    <property type="project" value="TreeGrafter"/>
</dbReference>
<dbReference type="CDD" id="cd04732">
    <property type="entry name" value="HisA"/>
    <property type="match status" value="1"/>
</dbReference>
<dbReference type="FunFam" id="3.20.20.70:FF:000009">
    <property type="entry name" value="1-(5-phosphoribosyl)-5-[(5-phosphoribosylamino)methylideneamino] imidazole-4-carboxamide isomerase"/>
    <property type="match status" value="1"/>
</dbReference>
<dbReference type="Gene3D" id="3.20.20.70">
    <property type="entry name" value="Aldolase class I"/>
    <property type="match status" value="1"/>
</dbReference>
<dbReference type="HAMAP" id="MF_01014">
    <property type="entry name" value="HisA"/>
    <property type="match status" value="1"/>
</dbReference>
<dbReference type="InterPro" id="IPR013785">
    <property type="entry name" value="Aldolase_TIM"/>
</dbReference>
<dbReference type="InterPro" id="IPR006062">
    <property type="entry name" value="His_biosynth"/>
</dbReference>
<dbReference type="InterPro" id="IPR006063">
    <property type="entry name" value="HisA_bact_arch"/>
</dbReference>
<dbReference type="InterPro" id="IPR044524">
    <property type="entry name" value="Isoase_HisA-like"/>
</dbReference>
<dbReference type="InterPro" id="IPR023016">
    <property type="entry name" value="Isoase_HisA-like_bact"/>
</dbReference>
<dbReference type="InterPro" id="IPR011060">
    <property type="entry name" value="RibuloseP-bd_barrel"/>
</dbReference>
<dbReference type="NCBIfam" id="TIGR00007">
    <property type="entry name" value="1-(5-phosphoribosyl)-5-[(5-phosphoribosylamino)methylideneamino]imidazole-4-carboxamide isomerase"/>
    <property type="match status" value="1"/>
</dbReference>
<dbReference type="PANTHER" id="PTHR43090">
    <property type="entry name" value="1-(5-PHOSPHORIBOSYL)-5-[(5-PHOSPHORIBOSYLAMINO)METHYLIDENEAMINO] IMIDAZOLE-4-CARBOXAMIDE ISOMERASE"/>
    <property type="match status" value="1"/>
</dbReference>
<dbReference type="PANTHER" id="PTHR43090:SF2">
    <property type="entry name" value="1-(5-PHOSPHORIBOSYL)-5-[(5-PHOSPHORIBOSYLAMINO)METHYLIDENEAMINO] IMIDAZOLE-4-CARBOXAMIDE ISOMERASE"/>
    <property type="match status" value="1"/>
</dbReference>
<dbReference type="Pfam" id="PF00977">
    <property type="entry name" value="His_biosynth"/>
    <property type="match status" value="1"/>
</dbReference>
<dbReference type="SUPFAM" id="SSF51366">
    <property type="entry name" value="Ribulose-phoshate binding barrel"/>
    <property type="match status" value="1"/>
</dbReference>